<name>RL9_SALEP</name>
<reference key="1">
    <citation type="journal article" date="2008" name="Genome Res.">
        <title>Comparative genome analysis of Salmonella enteritidis PT4 and Salmonella gallinarum 287/91 provides insights into evolutionary and host adaptation pathways.</title>
        <authorList>
            <person name="Thomson N.R."/>
            <person name="Clayton D.J."/>
            <person name="Windhorst D."/>
            <person name="Vernikos G."/>
            <person name="Davidson S."/>
            <person name="Churcher C."/>
            <person name="Quail M.A."/>
            <person name="Stevens M."/>
            <person name="Jones M.A."/>
            <person name="Watson M."/>
            <person name="Barron A."/>
            <person name="Layton A."/>
            <person name="Pickard D."/>
            <person name="Kingsley R.A."/>
            <person name="Bignell A."/>
            <person name="Clark L."/>
            <person name="Harris B."/>
            <person name="Ormond D."/>
            <person name="Abdellah Z."/>
            <person name="Brooks K."/>
            <person name="Cherevach I."/>
            <person name="Chillingworth T."/>
            <person name="Woodward J."/>
            <person name="Norberczak H."/>
            <person name="Lord A."/>
            <person name="Arrowsmith C."/>
            <person name="Jagels K."/>
            <person name="Moule S."/>
            <person name="Mungall K."/>
            <person name="Saunders M."/>
            <person name="Whitehead S."/>
            <person name="Chabalgoity J.A."/>
            <person name="Maskell D."/>
            <person name="Humphreys T."/>
            <person name="Roberts M."/>
            <person name="Barrow P.A."/>
            <person name="Dougan G."/>
            <person name="Parkhill J."/>
        </authorList>
    </citation>
    <scope>NUCLEOTIDE SEQUENCE [LARGE SCALE GENOMIC DNA]</scope>
    <source>
        <strain>P125109</strain>
    </source>
</reference>
<gene>
    <name evidence="1" type="primary">rplI</name>
    <name type="ordered locus">SEN4160</name>
</gene>
<sequence>MQVILLDKVANLGSLGDQVNVKAGYARNFLVPKGKAVPATKKNVEYFEARRAELEAKLADVLAAANARAEKINALETVTIASKAGDEGKLFGSIGTRDIADAVTAAGVDVAKSEVRLPNGVLRTTGEHEVNFQVHSEVFAKVIINVVAE</sequence>
<proteinExistence type="inferred from homology"/>
<dbReference type="EMBL" id="AM933172">
    <property type="protein sequence ID" value="CAR35720.1"/>
    <property type="molecule type" value="Genomic_DNA"/>
</dbReference>
<dbReference type="RefSeq" id="WP_001196059.1">
    <property type="nucleotide sequence ID" value="NC_011294.1"/>
</dbReference>
<dbReference type="SMR" id="B5R0S1"/>
<dbReference type="KEGG" id="set:SEN4160"/>
<dbReference type="HOGENOM" id="CLU_078938_4_1_6"/>
<dbReference type="Proteomes" id="UP000000613">
    <property type="component" value="Chromosome"/>
</dbReference>
<dbReference type="GO" id="GO:1990904">
    <property type="term" value="C:ribonucleoprotein complex"/>
    <property type="evidence" value="ECO:0007669"/>
    <property type="project" value="UniProtKB-KW"/>
</dbReference>
<dbReference type="GO" id="GO:0005840">
    <property type="term" value="C:ribosome"/>
    <property type="evidence" value="ECO:0007669"/>
    <property type="project" value="UniProtKB-KW"/>
</dbReference>
<dbReference type="GO" id="GO:0019843">
    <property type="term" value="F:rRNA binding"/>
    <property type="evidence" value="ECO:0007669"/>
    <property type="project" value="UniProtKB-UniRule"/>
</dbReference>
<dbReference type="GO" id="GO:0003735">
    <property type="term" value="F:structural constituent of ribosome"/>
    <property type="evidence" value="ECO:0007669"/>
    <property type="project" value="InterPro"/>
</dbReference>
<dbReference type="GO" id="GO:0006412">
    <property type="term" value="P:translation"/>
    <property type="evidence" value="ECO:0007669"/>
    <property type="project" value="UniProtKB-UniRule"/>
</dbReference>
<dbReference type="FunFam" id="3.10.430.100:FF:000001">
    <property type="entry name" value="50S ribosomal protein L9"/>
    <property type="match status" value="1"/>
</dbReference>
<dbReference type="FunFam" id="3.40.5.10:FF:000001">
    <property type="entry name" value="50S ribosomal protein L9"/>
    <property type="match status" value="1"/>
</dbReference>
<dbReference type="Gene3D" id="3.10.430.100">
    <property type="entry name" value="Ribosomal protein L9, C-terminal domain"/>
    <property type="match status" value="1"/>
</dbReference>
<dbReference type="Gene3D" id="3.40.5.10">
    <property type="entry name" value="Ribosomal protein L9, N-terminal domain"/>
    <property type="match status" value="1"/>
</dbReference>
<dbReference type="HAMAP" id="MF_00503">
    <property type="entry name" value="Ribosomal_bL9"/>
    <property type="match status" value="1"/>
</dbReference>
<dbReference type="InterPro" id="IPR000244">
    <property type="entry name" value="Ribosomal_bL9"/>
</dbReference>
<dbReference type="InterPro" id="IPR009027">
    <property type="entry name" value="Ribosomal_bL9/RNase_H1_N"/>
</dbReference>
<dbReference type="InterPro" id="IPR020594">
    <property type="entry name" value="Ribosomal_bL9_bac/chp"/>
</dbReference>
<dbReference type="InterPro" id="IPR020069">
    <property type="entry name" value="Ribosomal_bL9_C"/>
</dbReference>
<dbReference type="InterPro" id="IPR036791">
    <property type="entry name" value="Ribosomal_bL9_C_sf"/>
</dbReference>
<dbReference type="InterPro" id="IPR020070">
    <property type="entry name" value="Ribosomal_bL9_N"/>
</dbReference>
<dbReference type="InterPro" id="IPR036935">
    <property type="entry name" value="Ribosomal_bL9_N_sf"/>
</dbReference>
<dbReference type="NCBIfam" id="TIGR00158">
    <property type="entry name" value="L9"/>
    <property type="match status" value="1"/>
</dbReference>
<dbReference type="PANTHER" id="PTHR21368">
    <property type="entry name" value="50S RIBOSOMAL PROTEIN L9"/>
    <property type="match status" value="1"/>
</dbReference>
<dbReference type="Pfam" id="PF03948">
    <property type="entry name" value="Ribosomal_L9_C"/>
    <property type="match status" value="1"/>
</dbReference>
<dbReference type="Pfam" id="PF01281">
    <property type="entry name" value="Ribosomal_L9_N"/>
    <property type="match status" value="1"/>
</dbReference>
<dbReference type="SUPFAM" id="SSF55658">
    <property type="entry name" value="L9 N-domain-like"/>
    <property type="match status" value="1"/>
</dbReference>
<dbReference type="SUPFAM" id="SSF55653">
    <property type="entry name" value="Ribosomal protein L9 C-domain"/>
    <property type="match status" value="1"/>
</dbReference>
<dbReference type="PROSITE" id="PS00651">
    <property type="entry name" value="RIBOSOMAL_L9"/>
    <property type="match status" value="1"/>
</dbReference>
<organism>
    <name type="scientific">Salmonella enteritidis PT4 (strain P125109)</name>
    <dbReference type="NCBI Taxonomy" id="550537"/>
    <lineage>
        <taxon>Bacteria</taxon>
        <taxon>Pseudomonadati</taxon>
        <taxon>Pseudomonadota</taxon>
        <taxon>Gammaproteobacteria</taxon>
        <taxon>Enterobacterales</taxon>
        <taxon>Enterobacteriaceae</taxon>
        <taxon>Salmonella</taxon>
    </lineage>
</organism>
<evidence type="ECO:0000255" key="1">
    <source>
        <dbReference type="HAMAP-Rule" id="MF_00503"/>
    </source>
</evidence>
<evidence type="ECO:0000305" key="2"/>
<accession>B5R0S1</accession>
<keyword id="KW-0687">Ribonucleoprotein</keyword>
<keyword id="KW-0689">Ribosomal protein</keyword>
<keyword id="KW-0694">RNA-binding</keyword>
<keyword id="KW-0699">rRNA-binding</keyword>
<feature type="chain" id="PRO_1000126965" description="Large ribosomal subunit protein bL9">
    <location>
        <begin position="1"/>
        <end position="149"/>
    </location>
</feature>
<protein>
    <recommendedName>
        <fullName evidence="1">Large ribosomal subunit protein bL9</fullName>
    </recommendedName>
    <alternativeName>
        <fullName evidence="2">50S ribosomal protein L9</fullName>
    </alternativeName>
</protein>
<comment type="function">
    <text evidence="1">Binds to the 23S rRNA.</text>
</comment>
<comment type="similarity">
    <text evidence="1">Belongs to the bacterial ribosomal protein bL9 family.</text>
</comment>